<feature type="chain" id="PRO_0000410983" description="RNA polymerase sigma factor RpoD">
    <location>
        <begin position="1"/>
        <end position="685"/>
    </location>
</feature>
<feature type="DNA-binding region" description="H-T-H motif" evidence="1">
    <location>
        <begin position="645"/>
        <end position="664"/>
    </location>
</feature>
<feature type="region of interest" description="Disordered" evidence="2">
    <location>
        <begin position="1"/>
        <end position="26"/>
    </location>
</feature>
<feature type="region of interest" description="Disordered" evidence="2">
    <location>
        <begin position="83"/>
        <end position="132"/>
    </location>
</feature>
<feature type="region of interest" description="Disordered" evidence="2">
    <location>
        <begin position="206"/>
        <end position="263"/>
    </location>
</feature>
<feature type="region of interest" description="Sigma-70 factor domain-2" evidence="1">
    <location>
        <begin position="451"/>
        <end position="521"/>
    </location>
</feature>
<feature type="region of interest" description="Sigma-70 factor domain-3" evidence="1">
    <location>
        <begin position="530"/>
        <end position="606"/>
    </location>
</feature>
<feature type="region of interest" description="Sigma-70 factor domain-4" evidence="1">
    <location>
        <begin position="619"/>
        <end position="672"/>
    </location>
</feature>
<feature type="short sequence motif" description="Interaction with polymerase core subunit RpoC">
    <location>
        <begin position="475"/>
        <end position="478"/>
    </location>
</feature>
<feature type="compositionally biased region" description="Basic and acidic residues" evidence="2">
    <location>
        <begin position="1"/>
        <end position="18"/>
    </location>
</feature>
<feature type="compositionally biased region" description="Acidic residues" evidence="2">
    <location>
        <begin position="92"/>
        <end position="105"/>
    </location>
</feature>
<feature type="compositionally biased region" description="Basic and acidic residues" evidence="2">
    <location>
        <begin position="120"/>
        <end position="132"/>
    </location>
</feature>
<feature type="compositionally biased region" description="Basic and acidic residues" evidence="2">
    <location>
        <begin position="217"/>
        <end position="239"/>
    </location>
</feature>
<feature type="compositionally biased region" description="Acidic residues" evidence="2">
    <location>
        <begin position="251"/>
        <end position="262"/>
    </location>
</feature>
<gene>
    <name evidence="1" type="primary">rpoD</name>
    <name type="synonym">sigA</name>
    <name type="ordered locus">RHE_CH02950</name>
</gene>
<dbReference type="EMBL" id="CP000133">
    <property type="protein sequence ID" value="ABC91717.1"/>
    <property type="molecule type" value="Genomic_DNA"/>
</dbReference>
<dbReference type="RefSeq" id="WP_011426193.1">
    <property type="nucleotide sequence ID" value="NC_007761.1"/>
</dbReference>
<dbReference type="SMR" id="Q2K619"/>
<dbReference type="KEGG" id="ret:RHE_CH02950"/>
<dbReference type="eggNOG" id="COG0568">
    <property type="taxonomic scope" value="Bacteria"/>
</dbReference>
<dbReference type="HOGENOM" id="CLU_014793_7_0_5"/>
<dbReference type="OrthoDB" id="9809557at2"/>
<dbReference type="Proteomes" id="UP000001936">
    <property type="component" value="Chromosome"/>
</dbReference>
<dbReference type="GO" id="GO:0005737">
    <property type="term" value="C:cytoplasm"/>
    <property type="evidence" value="ECO:0007669"/>
    <property type="project" value="UniProtKB-SubCell"/>
</dbReference>
<dbReference type="GO" id="GO:0003677">
    <property type="term" value="F:DNA binding"/>
    <property type="evidence" value="ECO:0007669"/>
    <property type="project" value="UniProtKB-UniRule"/>
</dbReference>
<dbReference type="GO" id="GO:0016987">
    <property type="term" value="F:sigma factor activity"/>
    <property type="evidence" value="ECO:0007669"/>
    <property type="project" value="UniProtKB-UniRule"/>
</dbReference>
<dbReference type="GO" id="GO:0006352">
    <property type="term" value="P:DNA-templated transcription initiation"/>
    <property type="evidence" value="ECO:0007669"/>
    <property type="project" value="UniProtKB-UniRule"/>
</dbReference>
<dbReference type="CDD" id="cd06171">
    <property type="entry name" value="Sigma70_r4"/>
    <property type="match status" value="1"/>
</dbReference>
<dbReference type="FunFam" id="1.10.10.10:FF:000002">
    <property type="entry name" value="RNA polymerase sigma factor SigA"/>
    <property type="match status" value="1"/>
</dbReference>
<dbReference type="FunFam" id="1.10.10.10:FF:000004">
    <property type="entry name" value="RNA polymerase sigma factor SigA"/>
    <property type="match status" value="1"/>
</dbReference>
<dbReference type="FunFam" id="1.10.601.10:FF:000001">
    <property type="entry name" value="RNA polymerase sigma factor SigA"/>
    <property type="match status" value="1"/>
</dbReference>
<dbReference type="Gene3D" id="1.10.601.10">
    <property type="entry name" value="RNA Polymerase Primary Sigma Factor"/>
    <property type="match status" value="1"/>
</dbReference>
<dbReference type="Gene3D" id="1.10.220.120">
    <property type="entry name" value="Sigma-70 factor, region 1.1"/>
    <property type="match status" value="1"/>
</dbReference>
<dbReference type="Gene3D" id="1.10.10.10">
    <property type="entry name" value="Winged helix-like DNA-binding domain superfamily/Winged helix DNA-binding domain"/>
    <property type="match status" value="2"/>
</dbReference>
<dbReference type="HAMAP" id="MF_00963">
    <property type="entry name" value="Sigma70_RpoD_SigA"/>
    <property type="match status" value="1"/>
</dbReference>
<dbReference type="InterPro" id="IPR014284">
    <property type="entry name" value="RNA_pol_sigma-70_dom"/>
</dbReference>
<dbReference type="InterPro" id="IPR000943">
    <property type="entry name" value="RNA_pol_sigma70"/>
</dbReference>
<dbReference type="InterPro" id="IPR009042">
    <property type="entry name" value="RNA_pol_sigma70_r1_2"/>
</dbReference>
<dbReference type="InterPro" id="IPR007627">
    <property type="entry name" value="RNA_pol_sigma70_r2"/>
</dbReference>
<dbReference type="InterPro" id="IPR007624">
    <property type="entry name" value="RNA_pol_sigma70_r3"/>
</dbReference>
<dbReference type="InterPro" id="IPR007630">
    <property type="entry name" value="RNA_pol_sigma70_r4"/>
</dbReference>
<dbReference type="InterPro" id="IPR007631">
    <property type="entry name" value="RNA_pol_sigma_70_non-ess"/>
</dbReference>
<dbReference type="InterPro" id="IPR007127">
    <property type="entry name" value="RNA_pol_sigma_70_r1_1"/>
</dbReference>
<dbReference type="InterPro" id="IPR042189">
    <property type="entry name" value="RNA_pol_sigma_70_r1_1_sf"/>
</dbReference>
<dbReference type="InterPro" id="IPR013325">
    <property type="entry name" value="RNA_pol_sigma_r2"/>
</dbReference>
<dbReference type="InterPro" id="IPR013324">
    <property type="entry name" value="RNA_pol_sigma_r3/r4-like"/>
</dbReference>
<dbReference type="InterPro" id="IPR012760">
    <property type="entry name" value="RNA_pol_sigma_RpoD_C"/>
</dbReference>
<dbReference type="InterPro" id="IPR050239">
    <property type="entry name" value="Sigma-70_RNA_pol_init_factors"/>
</dbReference>
<dbReference type="InterPro" id="IPR028630">
    <property type="entry name" value="Sigma70_RpoD"/>
</dbReference>
<dbReference type="InterPro" id="IPR036388">
    <property type="entry name" value="WH-like_DNA-bd_sf"/>
</dbReference>
<dbReference type="NCBIfam" id="NF004208">
    <property type="entry name" value="PRK05658.1"/>
    <property type="match status" value="1"/>
</dbReference>
<dbReference type="NCBIfam" id="TIGR02393">
    <property type="entry name" value="RpoD_Cterm"/>
    <property type="match status" value="1"/>
</dbReference>
<dbReference type="NCBIfam" id="TIGR02937">
    <property type="entry name" value="sigma70-ECF"/>
    <property type="match status" value="1"/>
</dbReference>
<dbReference type="PANTHER" id="PTHR30603">
    <property type="entry name" value="RNA POLYMERASE SIGMA FACTOR RPO"/>
    <property type="match status" value="1"/>
</dbReference>
<dbReference type="PANTHER" id="PTHR30603:SF60">
    <property type="entry name" value="RNA POLYMERASE SIGMA FACTOR RPOD"/>
    <property type="match status" value="1"/>
</dbReference>
<dbReference type="Pfam" id="PF04546">
    <property type="entry name" value="Sigma70_ner"/>
    <property type="match status" value="1"/>
</dbReference>
<dbReference type="Pfam" id="PF03979">
    <property type="entry name" value="Sigma70_r1_1"/>
    <property type="match status" value="1"/>
</dbReference>
<dbReference type="Pfam" id="PF00140">
    <property type="entry name" value="Sigma70_r1_2"/>
    <property type="match status" value="1"/>
</dbReference>
<dbReference type="Pfam" id="PF04542">
    <property type="entry name" value="Sigma70_r2"/>
    <property type="match status" value="1"/>
</dbReference>
<dbReference type="Pfam" id="PF04539">
    <property type="entry name" value="Sigma70_r3"/>
    <property type="match status" value="1"/>
</dbReference>
<dbReference type="Pfam" id="PF04545">
    <property type="entry name" value="Sigma70_r4"/>
    <property type="match status" value="1"/>
</dbReference>
<dbReference type="PRINTS" id="PR00046">
    <property type="entry name" value="SIGMA70FCT"/>
</dbReference>
<dbReference type="SUPFAM" id="SSF88946">
    <property type="entry name" value="Sigma2 domain of RNA polymerase sigma factors"/>
    <property type="match status" value="1"/>
</dbReference>
<dbReference type="SUPFAM" id="SSF88659">
    <property type="entry name" value="Sigma3 and sigma4 domains of RNA polymerase sigma factors"/>
    <property type="match status" value="2"/>
</dbReference>
<dbReference type="PROSITE" id="PS00715">
    <property type="entry name" value="SIGMA70_1"/>
    <property type="match status" value="1"/>
</dbReference>
<dbReference type="PROSITE" id="PS00716">
    <property type="entry name" value="SIGMA70_2"/>
    <property type="match status" value="1"/>
</dbReference>
<keyword id="KW-0963">Cytoplasm</keyword>
<keyword id="KW-0238">DNA-binding</keyword>
<keyword id="KW-1185">Reference proteome</keyword>
<keyword id="KW-0731">Sigma factor</keyword>
<keyword id="KW-0804">Transcription</keyword>
<keyword id="KW-0805">Transcription regulation</keyword>
<protein>
    <recommendedName>
        <fullName evidence="1">RNA polymerase sigma factor RpoD</fullName>
    </recommendedName>
    <alternativeName>
        <fullName evidence="1">Sigma-70</fullName>
    </alternativeName>
    <alternativeName>
        <fullName>Sigma-A</fullName>
    </alternativeName>
</protein>
<comment type="function">
    <text evidence="1 3">Sigma factors are initiation factors that promote the attachment of RNA polymerase to specific initiation sites and are then released. This sigma factor is the primary sigma factor during exponential growth. The sigma-70 promoter consensus for this organism is 5'-CTTGAC-N(16-23)-TATNNT-3'.</text>
</comment>
<comment type="subunit">
    <text evidence="1">Interacts transiently with the RNA polymerase catalytic core.</text>
</comment>
<comment type="subcellular location">
    <subcellularLocation>
        <location evidence="1">Cytoplasm</location>
    </subcellularLocation>
</comment>
<comment type="induction">
    <text evidence="3">Expressed during exponential and stationary phase growth, under autologous control.</text>
</comment>
<comment type="similarity">
    <text evidence="1">Belongs to the sigma-70 factor family. RpoD/SigA subfamily.</text>
</comment>
<name>RPOD_RHIEC</name>
<reference key="1">
    <citation type="journal article" date="2006" name="Proc. Natl. Acad. Sci. U.S.A.">
        <title>The partitioned Rhizobium etli genome: genetic and metabolic redundancy in seven interacting replicons.</title>
        <authorList>
            <person name="Gonzalez V."/>
            <person name="Santamaria R.I."/>
            <person name="Bustos P."/>
            <person name="Hernandez-Gonzalez I."/>
            <person name="Medrano-Soto A."/>
            <person name="Moreno-Hagelsieb G."/>
            <person name="Janga S.C."/>
            <person name="Ramirez M.A."/>
            <person name="Jimenez-Jacinto V."/>
            <person name="Collado-Vides J."/>
            <person name="Davila G."/>
        </authorList>
    </citation>
    <scope>NUCLEOTIDE SEQUENCE [LARGE SCALE GENOMIC DNA]</scope>
    <source>
        <strain>ATCC 51251 / DSM 11541 / JCM 21823 / NBRC 15573 / CFN 42</strain>
    </source>
</reference>
<reference key="2">
    <citation type="journal article" date="2006" name="Nucleic Acids Res.">
        <title>The Rhizobium etli sigma70 (SigA) factor recognizes a lax consensus promoter.</title>
        <authorList>
            <person name="Ramirez-Romero M.A."/>
            <person name="Masulis I."/>
            <person name="Cevallos M.A."/>
            <person name="Gonzalez V."/>
            <person name="Davila G."/>
        </authorList>
    </citation>
    <scope>FUNCTION AS A SIGMA FACTOR</scope>
    <scope>DNA-BINDING</scope>
    <scope>INDUCTION</scope>
    <source>
        <strain>ATCC 51251 / DSM 11541 / JCM 21823 / NBRC 15573 / CFN 42</strain>
    </source>
</reference>
<proteinExistence type="evidence at protein level"/>
<sequence length="685" mass="77201">MATKVKENEDAEVERDGASDGPLLDLSDDAVKKMIKAAKKRGYVTMDELNAVLPSEEVTSEQIEDTMSMLSDMGINVIEDEEAEEAGASGGGDDDDAGGDEDSEGGELAPSAGTALATAKKKEPTDRTDDPVRMYLREMGSVELLSREGEIAIAKRIEAGRETMIAGLCESPLTFQALIIWRDELNEGTTLLREIIDLETTYSGPEAKAAPQFQSPEKIEADRKAAEEKEKTRRARSGDDDITDVGGEGLPPEEEEEDEDESNLSLAAMEAELRPQVMETLDIIAETYKKLRKLQDQQVEQRLAATGTLSSAQERRYKELKDELIKAVKSLSLNQNRIDALVEQLYDINKRLVQNEGRLLRLAESYGVKRDSFLEQYQGAELDPNWMKSIGNLAARGWKEFAKAENTTIRDIRQEIQNLATETGISISEFRRIVHMVQKGEREARIAKKEMVEANLRLVISIAKKYTNRGLQFLDLIQEGNIGLMKAVDKFEYRRGYKFSTYATWWIRQAITRSIADQARTIRIPVHMIETINKIVRTSRQMLHEIGREPTPEELAEKLAMPLEKVRKVLKIAKEPISLETPVGDEEDSHLGDFIEDKNALLPIDAAIQANLRETTTRVLASLTPREERVLRMRFGIGMNTDHTLEEVGQQFSVTRERIRQIEAKALRKLKHPSRSRKLRSFLDS</sequence>
<organism>
    <name type="scientific">Rhizobium etli (strain ATCC 51251 / DSM 11541 / JCM 21823 / NBRC 15573 / CFN 42)</name>
    <dbReference type="NCBI Taxonomy" id="347834"/>
    <lineage>
        <taxon>Bacteria</taxon>
        <taxon>Pseudomonadati</taxon>
        <taxon>Pseudomonadota</taxon>
        <taxon>Alphaproteobacteria</taxon>
        <taxon>Hyphomicrobiales</taxon>
        <taxon>Rhizobiaceae</taxon>
        <taxon>Rhizobium/Agrobacterium group</taxon>
        <taxon>Rhizobium</taxon>
    </lineage>
</organism>
<evidence type="ECO:0000255" key="1">
    <source>
        <dbReference type="HAMAP-Rule" id="MF_00963"/>
    </source>
</evidence>
<evidence type="ECO:0000256" key="2">
    <source>
        <dbReference type="SAM" id="MobiDB-lite"/>
    </source>
</evidence>
<evidence type="ECO:0000269" key="3">
    <source>
    </source>
</evidence>
<accession>Q2K619</accession>